<proteinExistence type="evidence at protein level"/>
<dbReference type="EMBL" id="CR382123">
    <property type="protein sequence ID" value="CAH01295.1"/>
    <property type="molecule type" value="Genomic_DNA"/>
</dbReference>
<dbReference type="RefSeq" id="XP_452444.1">
    <property type="nucleotide sequence ID" value="XM_452444.1"/>
</dbReference>
<dbReference type="SMR" id="Q6CUE5"/>
<dbReference type="FunCoup" id="Q6CUE5">
    <property type="interactions" value="98"/>
</dbReference>
<dbReference type="IntAct" id="Q6CUE5">
    <property type="interactions" value="1"/>
</dbReference>
<dbReference type="MINT" id="Q6CUE5"/>
<dbReference type="STRING" id="284590.Q6CUE5"/>
<dbReference type="PaxDb" id="284590-Q6CUE5"/>
<dbReference type="KEGG" id="kla:KLLA0_C05500g"/>
<dbReference type="HOGENOM" id="CLU_953353_0_0_1"/>
<dbReference type="InParanoid" id="Q6CUE5"/>
<dbReference type="OMA" id="CYQMKQI"/>
<dbReference type="Proteomes" id="UP000000598">
    <property type="component" value="Chromosome C"/>
</dbReference>
<dbReference type="GO" id="GO:0000776">
    <property type="term" value="C:kinetochore"/>
    <property type="evidence" value="ECO:0007669"/>
    <property type="project" value="UniProtKB-KW"/>
</dbReference>
<dbReference type="GO" id="GO:0005634">
    <property type="term" value="C:nucleus"/>
    <property type="evidence" value="ECO:0007669"/>
    <property type="project" value="UniProtKB-SubCell"/>
</dbReference>
<dbReference type="GO" id="GO:0051301">
    <property type="term" value="P:cell division"/>
    <property type="evidence" value="ECO:0007669"/>
    <property type="project" value="UniProtKB-KW"/>
</dbReference>
<dbReference type="GO" id="GO:0051321">
    <property type="term" value="P:meiotic cell cycle"/>
    <property type="evidence" value="ECO:0007669"/>
    <property type="project" value="UniProtKB-KW"/>
</dbReference>
<dbReference type="InterPro" id="IPR048743">
    <property type="entry name" value="AME1"/>
</dbReference>
<dbReference type="Pfam" id="PF20994">
    <property type="entry name" value="CENPU"/>
    <property type="match status" value="1"/>
</dbReference>
<comment type="function">
    <text evidence="1 3">Component of the kinetochore, a multiprotein complex that assembles on centromeric DNA and attaches chromosomes to spindle microtubules, mediating chromosome segregation and sister chromatid segregation during meiosis and mitosis (By similarity). Component of the inner kinetochore COMA subcomplex, which connects centromere-associated proteins and the outer kinetochore (PubMed:29046335). COMA interacts with other inner kinetochore proteins to form the inner kinetochore constitutive centromere-associated network (CCAN), which serves as a structural platform for outer kinetochore assembly (By similarity).</text>
</comment>
<comment type="subunit">
    <text evidence="1 3">Component of the heterotetrameric kinetochore subcomplex COMA, which consists of AME1, CTF19, MCM21 and OKP1 (PubMed:29046335). The COMA subcomplex is part of a larger constitutive centromere-associated network (CCAN) (also known as central kinetochore CTF19 complex in yeast) (By similarity). COMA binds the centromeric nucleosome-binding protein MIF2, and to the outer kinetochore MIND subcomplex, probably via AME1. AME1 interacts directly with OKP1 and an NKP1-NKP2 dimer (PubMed:29046335).</text>
</comment>
<comment type="subcellular location">
    <subcellularLocation>
        <location evidence="1">Nucleus</location>
    </subcellularLocation>
    <subcellularLocation>
        <location evidence="1">Chromosome</location>
        <location evidence="1">Centromere</location>
        <location evidence="1">Kinetochore</location>
    </subcellularLocation>
</comment>
<comment type="similarity">
    <text evidence="4">Belongs to the CENP-U/AME1 family.</text>
</comment>
<gene>
    <name type="primary">AME1</name>
    <name type="ordered locus">KLLA0C05500g</name>
</gene>
<reference key="1">
    <citation type="journal article" date="2004" name="Nature">
        <title>Genome evolution in yeasts.</title>
        <authorList>
            <person name="Dujon B."/>
            <person name="Sherman D."/>
            <person name="Fischer G."/>
            <person name="Durrens P."/>
            <person name="Casaregola S."/>
            <person name="Lafontaine I."/>
            <person name="de Montigny J."/>
            <person name="Marck C."/>
            <person name="Neuveglise C."/>
            <person name="Talla E."/>
            <person name="Goffard N."/>
            <person name="Frangeul L."/>
            <person name="Aigle M."/>
            <person name="Anthouard V."/>
            <person name="Babour A."/>
            <person name="Barbe V."/>
            <person name="Barnay S."/>
            <person name="Blanchin S."/>
            <person name="Beckerich J.-M."/>
            <person name="Beyne E."/>
            <person name="Bleykasten C."/>
            <person name="Boisrame A."/>
            <person name="Boyer J."/>
            <person name="Cattolico L."/>
            <person name="Confanioleri F."/>
            <person name="de Daruvar A."/>
            <person name="Despons L."/>
            <person name="Fabre E."/>
            <person name="Fairhead C."/>
            <person name="Ferry-Dumazet H."/>
            <person name="Groppi A."/>
            <person name="Hantraye F."/>
            <person name="Hennequin C."/>
            <person name="Jauniaux N."/>
            <person name="Joyet P."/>
            <person name="Kachouri R."/>
            <person name="Kerrest A."/>
            <person name="Koszul R."/>
            <person name="Lemaire M."/>
            <person name="Lesur I."/>
            <person name="Ma L."/>
            <person name="Muller H."/>
            <person name="Nicaud J.-M."/>
            <person name="Nikolski M."/>
            <person name="Oztas S."/>
            <person name="Ozier-Kalogeropoulos O."/>
            <person name="Pellenz S."/>
            <person name="Potier S."/>
            <person name="Richard G.-F."/>
            <person name="Straub M.-L."/>
            <person name="Suleau A."/>
            <person name="Swennen D."/>
            <person name="Tekaia F."/>
            <person name="Wesolowski-Louvel M."/>
            <person name="Westhof E."/>
            <person name="Wirth B."/>
            <person name="Zeniou-Meyer M."/>
            <person name="Zivanovic Y."/>
            <person name="Bolotin-Fukuhara M."/>
            <person name="Thierry A."/>
            <person name="Bouchier C."/>
            <person name="Caudron B."/>
            <person name="Scarpelli C."/>
            <person name="Gaillardin C."/>
            <person name="Weissenbach J."/>
            <person name="Wincker P."/>
            <person name="Souciet J.-L."/>
        </authorList>
    </citation>
    <scope>NUCLEOTIDE SEQUENCE [LARGE SCALE GENOMIC DNA]</scope>
    <source>
        <strain>ATCC 8585 / CBS 2359 / DSM 70799 / NBRC 1267 / NRRL Y-1140 / WM37</strain>
    </source>
</reference>
<reference key="2">
    <citation type="journal article" date="2017" name="EMBO J.">
        <title>Molecular basis for inner kinetochore configuration through RWD domain-peptide interactions.</title>
        <authorList>
            <person name="Schmitzberger F."/>
            <person name="Richter M.M."/>
            <person name="Gordiyenko Y."/>
            <person name="Robinson C.V."/>
            <person name="Dadlez M."/>
            <person name="Westermann S."/>
        </authorList>
    </citation>
    <scope>SUBUNIT</scope>
    <scope>INTERACTION WITH OKP1; NKP1 AND NKP2</scope>
    <scope>FUNCTION</scope>
</reference>
<keyword id="KW-0131">Cell cycle</keyword>
<keyword id="KW-0132">Cell division</keyword>
<keyword id="KW-0137">Centromere</keyword>
<keyword id="KW-0158">Chromosome</keyword>
<keyword id="KW-0995">Kinetochore</keyword>
<keyword id="KW-0469">Meiosis</keyword>
<keyword id="KW-0498">Mitosis</keyword>
<keyword id="KW-0539">Nucleus</keyword>
<keyword id="KW-1185">Reference proteome</keyword>
<name>CENPU_KLULA</name>
<feature type="chain" id="PRO_0000443077" description="Inner kinetochore subunit AME1">
    <location>
        <begin position="1"/>
        <end position="292"/>
    </location>
</feature>
<feature type="region of interest" description="Disordered" evidence="2">
    <location>
        <begin position="42"/>
        <end position="63"/>
    </location>
</feature>
<feature type="region of interest" description="Interaction with OKP1" evidence="3">
    <location>
        <begin position="129"/>
        <end position="247"/>
    </location>
</feature>
<feature type="region of interest" description="Interaction with NKP1-NKP2" evidence="3">
    <location>
        <begin position="268"/>
        <end position="292"/>
    </location>
</feature>
<protein>
    <recommendedName>
        <fullName>Inner kinetochore subunit AME1</fullName>
    </recommendedName>
    <alternativeName>
        <fullName>CENP-U homolog</fullName>
    </alternativeName>
    <alternativeName>
        <fullName>Constitutive centromere-associated network protein AME1</fullName>
    </alternativeName>
</protein>
<accession>Q6CUE5</accession>
<evidence type="ECO:0000250" key="1">
    <source>
        <dbReference type="UniProtKB" id="P38313"/>
    </source>
</evidence>
<evidence type="ECO:0000256" key="2">
    <source>
        <dbReference type="SAM" id="MobiDB-lite"/>
    </source>
</evidence>
<evidence type="ECO:0000269" key="3">
    <source>
    </source>
</evidence>
<evidence type="ECO:0000305" key="4"/>
<sequence>MDALKQRHLKLLYRQRGSASRTIDYDVVIEPELREDGDLVTDSQLTEQDDQSFPDIQVPSPDRVDDFDLNQGDGLMDKATANEDDIDHVIGDEVAAVNAPVETSDLVIDTTQFDSMTLSQLSTPLTSMATIDVLRRLLETVILVTIEERTSQFNRAGSARLRLKLKLEIKILTWFLHQSKEDLITISELNLSNNDLLYRLKQISLLKNSLSRSLLDVRSAISSYEGPNNALSEEQVALQNFKRINELILSQRIDTIINNNLPPDTSTFDTESKKGLLPTLKTLNESLQNTIG</sequence>
<organism>
    <name type="scientific">Kluyveromyces lactis (strain ATCC 8585 / CBS 2359 / DSM 70799 / NBRC 1267 / NRRL Y-1140 / WM37)</name>
    <name type="common">Yeast</name>
    <name type="synonym">Candida sphaerica</name>
    <dbReference type="NCBI Taxonomy" id="284590"/>
    <lineage>
        <taxon>Eukaryota</taxon>
        <taxon>Fungi</taxon>
        <taxon>Dikarya</taxon>
        <taxon>Ascomycota</taxon>
        <taxon>Saccharomycotina</taxon>
        <taxon>Saccharomycetes</taxon>
        <taxon>Saccharomycetales</taxon>
        <taxon>Saccharomycetaceae</taxon>
        <taxon>Kluyveromyces</taxon>
    </lineage>
</organism>